<evidence type="ECO:0000255" key="1">
    <source>
        <dbReference type="HAMAP-Rule" id="MF_00017"/>
    </source>
</evidence>
<proteinExistence type="inferred from homology"/>
<protein>
    <recommendedName>
        <fullName evidence="1">Recombination protein RecR</fullName>
    </recommendedName>
</protein>
<organism>
    <name type="scientific">Pseudomonas putida (strain W619)</name>
    <dbReference type="NCBI Taxonomy" id="390235"/>
    <lineage>
        <taxon>Bacteria</taxon>
        <taxon>Pseudomonadati</taxon>
        <taxon>Pseudomonadota</taxon>
        <taxon>Gammaproteobacteria</taxon>
        <taxon>Pseudomonadales</taxon>
        <taxon>Pseudomonadaceae</taxon>
        <taxon>Pseudomonas</taxon>
    </lineage>
</organism>
<accession>B1JBZ1</accession>
<reference key="1">
    <citation type="submission" date="2008-02" db="EMBL/GenBank/DDBJ databases">
        <title>Complete sequence of Pseudomonas putida W619.</title>
        <authorList>
            <person name="Copeland A."/>
            <person name="Lucas S."/>
            <person name="Lapidus A."/>
            <person name="Barry K."/>
            <person name="Detter J.C."/>
            <person name="Glavina del Rio T."/>
            <person name="Dalin E."/>
            <person name="Tice H."/>
            <person name="Pitluck S."/>
            <person name="Chain P."/>
            <person name="Malfatti S."/>
            <person name="Shin M."/>
            <person name="Vergez L."/>
            <person name="Schmutz J."/>
            <person name="Larimer F."/>
            <person name="Land M."/>
            <person name="Hauser L."/>
            <person name="Kyrpides N."/>
            <person name="Kim E."/>
            <person name="Taghavi S."/>
            <person name="Vangronsveld D."/>
            <person name="van der Lelie D."/>
            <person name="Richardson P."/>
        </authorList>
    </citation>
    <scope>NUCLEOTIDE SEQUENCE [LARGE SCALE GENOMIC DNA]</scope>
    <source>
        <strain>W619</strain>
    </source>
</reference>
<comment type="function">
    <text evidence="1">May play a role in DNA repair. It seems to be involved in an RecBC-independent recombinational process of DNA repair. It may act with RecF and RecO.</text>
</comment>
<comment type="similarity">
    <text evidence="1">Belongs to the RecR family.</text>
</comment>
<sequence length="200" mass="21502">MSFSPLIRQLIDALRTLPGVGQKTAQRMALQLLERDRSGGVRLAQALSLAMEGVGHCRQCRTLTEQELCPQCADTRRDDTQLCVVEGPMDVYAVEQTGYRGRYFVLKGHLSPLDGLGPDAIGVPQLMARIEEQGSFTEVILATNPTVEGEATAHYIAQLLAEKGLVASRIAHGVPLGGELELVDGGTLAHAFAGRKPISL</sequence>
<dbReference type="EMBL" id="CP000949">
    <property type="protein sequence ID" value="ACA74067.1"/>
    <property type="molecule type" value="Genomic_DNA"/>
</dbReference>
<dbReference type="SMR" id="B1JBZ1"/>
<dbReference type="STRING" id="390235.PputW619_3585"/>
<dbReference type="KEGG" id="ppw:PputW619_3585"/>
<dbReference type="eggNOG" id="COG0353">
    <property type="taxonomic scope" value="Bacteria"/>
</dbReference>
<dbReference type="HOGENOM" id="CLU_060739_1_2_6"/>
<dbReference type="OrthoDB" id="9802672at2"/>
<dbReference type="GO" id="GO:0003677">
    <property type="term" value="F:DNA binding"/>
    <property type="evidence" value="ECO:0007669"/>
    <property type="project" value="UniProtKB-UniRule"/>
</dbReference>
<dbReference type="GO" id="GO:0008270">
    <property type="term" value="F:zinc ion binding"/>
    <property type="evidence" value="ECO:0007669"/>
    <property type="project" value="UniProtKB-KW"/>
</dbReference>
<dbReference type="GO" id="GO:0006310">
    <property type="term" value="P:DNA recombination"/>
    <property type="evidence" value="ECO:0007669"/>
    <property type="project" value="UniProtKB-UniRule"/>
</dbReference>
<dbReference type="GO" id="GO:0006281">
    <property type="term" value="P:DNA repair"/>
    <property type="evidence" value="ECO:0007669"/>
    <property type="project" value="UniProtKB-UniRule"/>
</dbReference>
<dbReference type="CDD" id="cd01025">
    <property type="entry name" value="TOPRIM_recR"/>
    <property type="match status" value="1"/>
</dbReference>
<dbReference type="FunFam" id="3.40.1360.10:FF:000001">
    <property type="entry name" value="Recombination protein RecR"/>
    <property type="match status" value="1"/>
</dbReference>
<dbReference type="Gene3D" id="3.40.1360.10">
    <property type="match status" value="1"/>
</dbReference>
<dbReference type="Gene3D" id="6.10.250.240">
    <property type="match status" value="1"/>
</dbReference>
<dbReference type="Gene3D" id="1.10.8.420">
    <property type="entry name" value="RecR Domain 1"/>
    <property type="match status" value="1"/>
</dbReference>
<dbReference type="HAMAP" id="MF_00017">
    <property type="entry name" value="RecR"/>
    <property type="match status" value="1"/>
</dbReference>
<dbReference type="InterPro" id="IPR000093">
    <property type="entry name" value="DNA_Rcmb_RecR"/>
</dbReference>
<dbReference type="InterPro" id="IPR023627">
    <property type="entry name" value="Rcmb_RecR"/>
</dbReference>
<dbReference type="InterPro" id="IPR015967">
    <property type="entry name" value="Rcmb_RecR_Znf"/>
</dbReference>
<dbReference type="InterPro" id="IPR006171">
    <property type="entry name" value="TOPRIM_dom"/>
</dbReference>
<dbReference type="InterPro" id="IPR034137">
    <property type="entry name" value="TOPRIM_RecR"/>
</dbReference>
<dbReference type="NCBIfam" id="TIGR00615">
    <property type="entry name" value="recR"/>
    <property type="match status" value="1"/>
</dbReference>
<dbReference type="PANTHER" id="PTHR30446">
    <property type="entry name" value="RECOMBINATION PROTEIN RECR"/>
    <property type="match status" value="1"/>
</dbReference>
<dbReference type="PANTHER" id="PTHR30446:SF0">
    <property type="entry name" value="RECOMBINATION PROTEIN RECR"/>
    <property type="match status" value="1"/>
</dbReference>
<dbReference type="Pfam" id="PF21175">
    <property type="entry name" value="RecR_C"/>
    <property type="match status" value="1"/>
</dbReference>
<dbReference type="Pfam" id="PF21176">
    <property type="entry name" value="RecR_HhH"/>
    <property type="match status" value="1"/>
</dbReference>
<dbReference type="Pfam" id="PF02132">
    <property type="entry name" value="RecR_ZnF"/>
    <property type="match status" value="1"/>
</dbReference>
<dbReference type="Pfam" id="PF13662">
    <property type="entry name" value="Toprim_4"/>
    <property type="match status" value="1"/>
</dbReference>
<dbReference type="SMART" id="SM00493">
    <property type="entry name" value="TOPRIM"/>
    <property type="match status" value="1"/>
</dbReference>
<dbReference type="SUPFAM" id="SSF111304">
    <property type="entry name" value="Recombination protein RecR"/>
    <property type="match status" value="1"/>
</dbReference>
<dbReference type="PROSITE" id="PS01300">
    <property type="entry name" value="RECR"/>
    <property type="match status" value="1"/>
</dbReference>
<dbReference type="PROSITE" id="PS50880">
    <property type="entry name" value="TOPRIM"/>
    <property type="match status" value="1"/>
</dbReference>
<gene>
    <name evidence="1" type="primary">recR</name>
    <name type="ordered locus">PputW619_3585</name>
</gene>
<keyword id="KW-0227">DNA damage</keyword>
<keyword id="KW-0233">DNA recombination</keyword>
<keyword id="KW-0234">DNA repair</keyword>
<keyword id="KW-0479">Metal-binding</keyword>
<keyword id="KW-0862">Zinc</keyword>
<keyword id="KW-0863">Zinc-finger</keyword>
<feature type="chain" id="PRO_1000089758" description="Recombination protein RecR">
    <location>
        <begin position="1"/>
        <end position="200"/>
    </location>
</feature>
<feature type="domain" description="Toprim" evidence="1">
    <location>
        <begin position="80"/>
        <end position="175"/>
    </location>
</feature>
<feature type="zinc finger region" description="C4-type" evidence="1">
    <location>
        <begin position="57"/>
        <end position="72"/>
    </location>
</feature>
<name>RECR_PSEPW</name>